<keyword id="KW-0963">Cytoplasm</keyword>
<keyword id="KW-0396">Initiation factor</keyword>
<keyword id="KW-0648">Protein biosynthesis</keyword>
<sequence length="175" mass="20214">MSTIAKDQTQINDKIRAKELRLIGQDGEQIGVKSKREALEMAERVDLDLVVVAPNAKPPVARIMDYGKFKFEQQKKEKEMKKKQKIINVKEIRLSPTIEEHDFQTKLKNGRKFLTKGDKCKVSIRFRGRAITHKEIGQRVLEKYADECKDIATVEQKPKMDGRQMFIMLAPTAEK</sequence>
<protein>
    <recommendedName>
        <fullName evidence="1">Translation initiation factor IF-3</fullName>
    </recommendedName>
</protein>
<comment type="function">
    <text evidence="1">IF-3 binds to the 30S ribosomal subunit and shifts the equilibrium between 70S ribosomes and their 50S and 30S subunits in favor of the free subunits, thus enhancing the availability of 30S subunits on which protein synthesis initiation begins.</text>
</comment>
<comment type="subunit">
    <text evidence="1">Monomer.</text>
</comment>
<comment type="subcellular location">
    <subcellularLocation>
        <location evidence="1">Cytoplasm</location>
    </subcellularLocation>
</comment>
<comment type="similarity">
    <text evidence="1">Belongs to the IF-3 family.</text>
</comment>
<gene>
    <name evidence="1" type="primary">infC</name>
    <name type="ordered locus">MW1624</name>
</gene>
<reference key="1">
    <citation type="journal article" date="2002" name="Lancet">
        <title>Genome and virulence determinants of high virulence community-acquired MRSA.</title>
        <authorList>
            <person name="Baba T."/>
            <person name="Takeuchi F."/>
            <person name="Kuroda M."/>
            <person name="Yuzawa H."/>
            <person name="Aoki K."/>
            <person name="Oguchi A."/>
            <person name="Nagai Y."/>
            <person name="Iwama N."/>
            <person name="Asano K."/>
            <person name="Naimi T."/>
            <person name="Kuroda H."/>
            <person name="Cui L."/>
            <person name="Yamamoto K."/>
            <person name="Hiramatsu K."/>
        </authorList>
    </citation>
    <scope>NUCLEOTIDE SEQUENCE [LARGE SCALE GENOMIC DNA]</scope>
    <source>
        <strain>MW2</strain>
    </source>
</reference>
<name>IF3_STAAW</name>
<feature type="chain" id="PRO_0000177580" description="Translation initiation factor IF-3">
    <location>
        <begin position="1"/>
        <end position="175"/>
    </location>
</feature>
<evidence type="ECO:0000255" key="1">
    <source>
        <dbReference type="HAMAP-Rule" id="MF_00080"/>
    </source>
</evidence>
<organism>
    <name type="scientific">Staphylococcus aureus (strain MW2)</name>
    <dbReference type="NCBI Taxonomy" id="196620"/>
    <lineage>
        <taxon>Bacteria</taxon>
        <taxon>Bacillati</taxon>
        <taxon>Bacillota</taxon>
        <taxon>Bacilli</taxon>
        <taxon>Bacillales</taxon>
        <taxon>Staphylococcaceae</taxon>
        <taxon>Staphylococcus</taxon>
    </lineage>
</organism>
<proteinExistence type="inferred from homology"/>
<dbReference type="EMBL" id="BA000033">
    <property type="protein sequence ID" value="BAB95489.1"/>
    <property type="molecule type" value="Genomic_DNA"/>
</dbReference>
<dbReference type="RefSeq" id="WP_001791162.1">
    <property type="nucleotide sequence ID" value="NC_003923.1"/>
</dbReference>
<dbReference type="SMR" id="P65141"/>
<dbReference type="GeneID" id="66839860"/>
<dbReference type="KEGG" id="sam:MW1624"/>
<dbReference type="HOGENOM" id="CLU_054919_3_2_9"/>
<dbReference type="GO" id="GO:0005829">
    <property type="term" value="C:cytosol"/>
    <property type="evidence" value="ECO:0007669"/>
    <property type="project" value="TreeGrafter"/>
</dbReference>
<dbReference type="GO" id="GO:0016020">
    <property type="term" value="C:membrane"/>
    <property type="evidence" value="ECO:0007669"/>
    <property type="project" value="TreeGrafter"/>
</dbReference>
<dbReference type="GO" id="GO:0043022">
    <property type="term" value="F:ribosome binding"/>
    <property type="evidence" value="ECO:0007669"/>
    <property type="project" value="TreeGrafter"/>
</dbReference>
<dbReference type="GO" id="GO:0003743">
    <property type="term" value="F:translation initiation factor activity"/>
    <property type="evidence" value="ECO:0007669"/>
    <property type="project" value="UniProtKB-UniRule"/>
</dbReference>
<dbReference type="GO" id="GO:0032790">
    <property type="term" value="P:ribosome disassembly"/>
    <property type="evidence" value="ECO:0007669"/>
    <property type="project" value="TreeGrafter"/>
</dbReference>
<dbReference type="FunFam" id="3.10.20.80:FF:000001">
    <property type="entry name" value="Translation initiation factor IF-3"/>
    <property type="match status" value="1"/>
</dbReference>
<dbReference type="FunFam" id="3.30.110.10:FF:000001">
    <property type="entry name" value="Translation initiation factor IF-3"/>
    <property type="match status" value="1"/>
</dbReference>
<dbReference type="Gene3D" id="3.30.110.10">
    <property type="entry name" value="Translation initiation factor 3 (IF-3), C-terminal domain"/>
    <property type="match status" value="1"/>
</dbReference>
<dbReference type="Gene3D" id="3.10.20.80">
    <property type="entry name" value="Translation initiation factor 3 (IF-3), N-terminal domain"/>
    <property type="match status" value="1"/>
</dbReference>
<dbReference type="HAMAP" id="MF_00080">
    <property type="entry name" value="IF_3"/>
    <property type="match status" value="1"/>
</dbReference>
<dbReference type="InterPro" id="IPR036788">
    <property type="entry name" value="T_IF-3_C_sf"/>
</dbReference>
<dbReference type="InterPro" id="IPR036787">
    <property type="entry name" value="T_IF-3_N_sf"/>
</dbReference>
<dbReference type="InterPro" id="IPR019813">
    <property type="entry name" value="Translation_initiation_fac3_CS"/>
</dbReference>
<dbReference type="InterPro" id="IPR001288">
    <property type="entry name" value="Translation_initiation_fac_3"/>
</dbReference>
<dbReference type="InterPro" id="IPR019815">
    <property type="entry name" value="Translation_initiation_fac_3_C"/>
</dbReference>
<dbReference type="InterPro" id="IPR019814">
    <property type="entry name" value="Translation_initiation_fac_3_N"/>
</dbReference>
<dbReference type="NCBIfam" id="TIGR00168">
    <property type="entry name" value="infC"/>
    <property type="match status" value="1"/>
</dbReference>
<dbReference type="PANTHER" id="PTHR10938">
    <property type="entry name" value="TRANSLATION INITIATION FACTOR IF-3"/>
    <property type="match status" value="1"/>
</dbReference>
<dbReference type="PANTHER" id="PTHR10938:SF0">
    <property type="entry name" value="TRANSLATION INITIATION FACTOR IF-3, MITOCHONDRIAL"/>
    <property type="match status" value="1"/>
</dbReference>
<dbReference type="Pfam" id="PF00707">
    <property type="entry name" value="IF3_C"/>
    <property type="match status" value="1"/>
</dbReference>
<dbReference type="Pfam" id="PF05198">
    <property type="entry name" value="IF3_N"/>
    <property type="match status" value="1"/>
</dbReference>
<dbReference type="SUPFAM" id="SSF55200">
    <property type="entry name" value="Translation initiation factor IF3, C-terminal domain"/>
    <property type="match status" value="1"/>
</dbReference>
<dbReference type="SUPFAM" id="SSF54364">
    <property type="entry name" value="Translation initiation factor IF3, N-terminal domain"/>
    <property type="match status" value="1"/>
</dbReference>
<dbReference type="PROSITE" id="PS00938">
    <property type="entry name" value="IF3"/>
    <property type="match status" value="1"/>
</dbReference>
<accession>P65141</accession>
<accession>Q8NW70</accession>
<accession>Q99TI1</accession>